<keyword id="KW-0328">Glycosyltransferase</keyword>
<keyword id="KW-0460">Magnesium</keyword>
<keyword id="KW-0665">Pyrimidine biosynthesis</keyword>
<keyword id="KW-0808">Transferase</keyword>
<sequence length="213" mass="23537">MKPYQRQFIEFALGKQVLKFGEFTLKSGRKSPYFFNAGLFNTGRDLALLGRFYAEALVDSGLEFDLLFGPAYKGIPIATTTAVALAEHHDLDLPYCFNRKEAKDHGEGGNLVGSALQGRVMLVDDVITAGTAIRESMEIIQANGATLAGVLISLDRQERGRGEISAIQEVERDYNCKVISIITLKDLIAYLEEKPEMAEHLAAVKAYREEFGV</sequence>
<accession>B5YWE0</accession>
<feature type="chain" id="PRO_1000138786" description="Orotate phosphoribosyltransferase">
    <location>
        <begin position="1"/>
        <end position="213"/>
    </location>
</feature>
<feature type="binding site" description="in other chain" evidence="1">
    <location>
        <position position="26"/>
    </location>
    <ligand>
        <name>5-phospho-alpha-D-ribose 1-diphosphate</name>
        <dbReference type="ChEBI" id="CHEBI:58017"/>
        <note>ligand shared between dimeric partners</note>
    </ligand>
</feature>
<feature type="binding site" evidence="1">
    <location>
        <begin position="34"/>
        <end position="35"/>
    </location>
    <ligand>
        <name>orotate</name>
        <dbReference type="ChEBI" id="CHEBI:30839"/>
    </ligand>
</feature>
<feature type="binding site" description="in other chain" evidence="1">
    <location>
        <begin position="72"/>
        <end position="73"/>
    </location>
    <ligand>
        <name>5-phospho-alpha-D-ribose 1-diphosphate</name>
        <dbReference type="ChEBI" id="CHEBI:58017"/>
        <note>ligand shared between dimeric partners</note>
    </ligand>
</feature>
<feature type="binding site" evidence="1">
    <location>
        <position position="99"/>
    </location>
    <ligand>
        <name>5-phospho-alpha-D-ribose 1-diphosphate</name>
        <dbReference type="ChEBI" id="CHEBI:58017"/>
        <note>ligand shared between dimeric partners</note>
    </ligand>
</feature>
<feature type="binding site" description="in other chain" evidence="1">
    <location>
        <position position="100"/>
    </location>
    <ligand>
        <name>5-phospho-alpha-D-ribose 1-diphosphate</name>
        <dbReference type="ChEBI" id="CHEBI:58017"/>
        <note>ligand shared between dimeric partners</note>
    </ligand>
</feature>
<feature type="binding site" evidence="1">
    <location>
        <position position="103"/>
    </location>
    <ligand>
        <name>5-phospho-alpha-D-ribose 1-diphosphate</name>
        <dbReference type="ChEBI" id="CHEBI:58017"/>
        <note>ligand shared between dimeric partners</note>
    </ligand>
</feature>
<feature type="binding site" evidence="1">
    <location>
        <position position="105"/>
    </location>
    <ligand>
        <name>5-phospho-alpha-D-ribose 1-diphosphate</name>
        <dbReference type="ChEBI" id="CHEBI:58017"/>
        <note>ligand shared between dimeric partners</note>
    </ligand>
</feature>
<feature type="binding site" description="in other chain" evidence="1">
    <location>
        <begin position="124"/>
        <end position="132"/>
    </location>
    <ligand>
        <name>5-phospho-alpha-D-ribose 1-diphosphate</name>
        <dbReference type="ChEBI" id="CHEBI:58017"/>
        <note>ligand shared between dimeric partners</note>
    </ligand>
</feature>
<feature type="binding site" evidence="1">
    <location>
        <position position="128"/>
    </location>
    <ligand>
        <name>orotate</name>
        <dbReference type="ChEBI" id="CHEBI:30839"/>
    </ligand>
</feature>
<feature type="binding site" evidence="1">
    <location>
        <position position="156"/>
    </location>
    <ligand>
        <name>orotate</name>
        <dbReference type="ChEBI" id="CHEBI:30839"/>
    </ligand>
</feature>
<proteinExistence type="inferred from homology"/>
<protein>
    <recommendedName>
        <fullName evidence="1">Orotate phosphoribosyltransferase</fullName>
        <shortName evidence="1">OPRT</shortName>
        <shortName evidence="1">OPRTase</shortName>
        <ecNumber evidence="1">2.4.2.10</ecNumber>
    </recommendedName>
</protein>
<evidence type="ECO:0000255" key="1">
    <source>
        <dbReference type="HAMAP-Rule" id="MF_01208"/>
    </source>
</evidence>
<name>PYRE_ECO5E</name>
<dbReference type="EC" id="2.4.2.10" evidence="1"/>
<dbReference type="EMBL" id="CP001164">
    <property type="protein sequence ID" value="ACI35346.1"/>
    <property type="molecule type" value="Genomic_DNA"/>
</dbReference>
<dbReference type="RefSeq" id="WP_000806161.1">
    <property type="nucleotide sequence ID" value="NC_011353.1"/>
</dbReference>
<dbReference type="SMR" id="B5YWE0"/>
<dbReference type="KEGG" id="ecf:ECH74115_5012"/>
<dbReference type="HOGENOM" id="CLU_074878_0_1_6"/>
<dbReference type="UniPathway" id="UPA00070">
    <property type="reaction ID" value="UER00119"/>
</dbReference>
<dbReference type="GO" id="GO:0005737">
    <property type="term" value="C:cytoplasm"/>
    <property type="evidence" value="ECO:0007669"/>
    <property type="project" value="TreeGrafter"/>
</dbReference>
<dbReference type="GO" id="GO:0000287">
    <property type="term" value="F:magnesium ion binding"/>
    <property type="evidence" value="ECO:0007669"/>
    <property type="project" value="UniProtKB-UniRule"/>
</dbReference>
<dbReference type="GO" id="GO:0004588">
    <property type="term" value="F:orotate phosphoribosyltransferase activity"/>
    <property type="evidence" value="ECO:0007669"/>
    <property type="project" value="UniProtKB-UniRule"/>
</dbReference>
<dbReference type="GO" id="GO:0006207">
    <property type="term" value="P:'de novo' pyrimidine nucleobase biosynthetic process"/>
    <property type="evidence" value="ECO:0007669"/>
    <property type="project" value="TreeGrafter"/>
</dbReference>
<dbReference type="GO" id="GO:0044205">
    <property type="term" value="P:'de novo' UMP biosynthetic process"/>
    <property type="evidence" value="ECO:0007669"/>
    <property type="project" value="UniProtKB-UniRule"/>
</dbReference>
<dbReference type="GO" id="GO:0046132">
    <property type="term" value="P:pyrimidine ribonucleoside biosynthetic process"/>
    <property type="evidence" value="ECO:0007669"/>
    <property type="project" value="TreeGrafter"/>
</dbReference>
<dbReference type="CDD" id="cd06223">
    <property type="entry name" value="PRTases_typeI"/>
    <property type="match status" value="1"/>
</dbReference>
<dbReference type="FunFam" id="3.40.50.2020:FF:000008">
    <property type="entry name" value="Orotate phosphoribosyltransferase"/>
    <property type="match status" value="1"/>
</dbReference>
<dbReference type="Gene3D" id="3.40.50.2020">
    <property type="match status" value="1"/>
</dbReference>
<dbReference type="HAMAP" id="MF_01208">
    <property type="entry name" value="PyrE"/>
    <property type="match status" value="1"/>
</dbReference>
<dbReference type="InterPro" id="IPR023031">
    <property type="entry name" value="OPRT"/>
</dbReference>
<dbReference type="InterPro" id="IPR004467">
    <property type="entry name" value="Or_phspho_trans_dom"/>
</dbReference>
<dbReference type="InterPro" id="IPR000836">
    <property type="entry name" value="PRibTrfase_dom"/>
</dbReference>
<dbReference type="InterPro" id="IPR029057">
    <property type="entry name" value="PRTase-like"/>
</dbReference>
<dbReference type="NCBIfam" id="TIGR00336">
    <property type="entry name" value="pyrE"/>
    <property type="match status" value="1"/>
</dbReference>
<dbReference type="PANTHER" id="PTHR46683">
    <property type="entry name" value="OROTATE PHOSPHORIBOSYLTRANSFERASE 1-RELATED"/>
    <property type="match status" value="1"/>
</dbReference>
<dbReference type="PANTHER" id="PTHR46683:SF1">
    <property type="entry name" value="OROTATE PHOSPHORIBOSYLTRANSFERASE 1-RELATED"/>
    <property type="match status" value="1"/>
</dbReference>
<dbReference type="Pfam" id="PF00156">
    <property type="entry name" value="Pribosyltran"/>
    <property type="match status" value="1"/>
</dbReference>
<dbReference type="SUPFAM" id="SSF53271">
    <property type="entry name" value="PRTase-like"/>
    <property type="match status" value="1"/>
</dbReference>
<dbReference type="PROSITE" id="PS00103">
    <property type="entry name" value="PUR_PYR_PR_TRANSFER"/>
    <property type="match status" value="1"/>
</dbReference>
<reference key="1">
    <citation type="journal article" date="2011" name="Proc. Natl. Acad. Sci. U.S.A.">
        <title>Genomic anatomy of Escherichia coli O157:H7 outbreaks.</title>
        <authorList>
            <person name="Eppinger M."/>
            <person name="Mammel M.K."/>
            <person name="Leclerc J.E."/>
            <person name="Ravel J."/>
            <person name="Cebula T.A."/>
        </authorList>
    </citation>
    <scope>NUCLEOTIDE SEQUENCE [LARGE SCALE GENOMIC DNA]</scope>
    <source>
        <strain>EC4115 / EHEC</strain>
    </source>
</reference>
<gene>
    <name evidence="1" type="primary">pyrE</name>
    <name type="ordered locus">ECH74115_5012</name>
</gene>
<organism>
    <name type="scientific">Escherichia coli O157:H7 (strain EC4115 / EHEC)</name>
    <dbReference type="NCBI Taxonomy" id="444450"/>
    <lineage>
        <taxon>Bacteria</taxon>
        <taxon>Pseudomonadati</taxon>
        <taxon>Pseudomonadota</taxon>
        <taxon>Gammaproteobacteria</taxon>
        <taxon>Enterobacterales</taxon>
        <taxon>Enterobacteriaceae</taxon>
        <taxon>Escherichia</taxon>
    </lineage>
</organism>
<comment type="function">
    <text evidence="1">Catalyzes the transfer of a ribosyl phosphate group from 5-phosphoribose 1-diphosphate to orotate, leading to the formation of orotidine monophosphate (OMP).</text>
</comment>
<comment type="catalytic activity">
    <reaction evidence="1">
        <text>orotidine 5'-phosphate + diphosphate = orotate + 5-phospho-alpha-D-ribose 1-diphosphate</text>
        <dbReference type="Rhea" id="RHEA:10380"/>
        <dbReference type="ChEBI" id="CHEBI:30839"/>
        <dbReference type="ChEBI" id="CHEBI:33019"/>
        <dbReference type="ChEBI" id="CHEBI:57538"/>
        <dbReference type="ChEBI" id="CHEBI:58017"/>
        <dbReference type="EC" id="2.4.2.10"/>
    </reaction>
</comment>
<comment type="cofactor">
    <cofactor evidence="1">
        <name>Mg(2+)</name>
        <dbReference type="ChEBI" id="CHEBI:18420"/>
    </cofactor>
</comment>
<comment type="pathway">
    <text evidence="1">Pyrimidine metabolism; UMP biosynthesis via de novo pathway; UMP from orotate: step 1/2.</text>
</comment>
<comment type="subunit">
    <text evidence="1">Homodimer.</text>
</comment>
<comment type="similarity">
    <text evidence="1">Belongs to the purine/pyrimidine phosphoribosyltransferase family. PyrE subfamily.</text>
</comment>